<accession>C3LR15</accession>
<comment type="function">
    <text evidence="1">Folate-binding protein involved in regulating the level of ATP-DnaA and in the modification of some tRNAs. It is probably a key factor in regulatory networks that act via tRNA modification, such as initiation of chromosomal replication.</text>
</comment>
<comment type="subcellular location">
    <subcellularLocation>
        <location evidence="1">Cytoplasm</location>
    </subcellularLocation>
</comment>
<comment type="similarity">
    <text evidence="1">Belongs to the tRNA-modifying YgfZ family.</text>
</comment>
<dbReference type="EMBL" id="CP001233">
    <property type="protein sequence ID" value="ACP06693.1"/>
    <property type="molecule type" value="Genomic_DNA"/>
</dbReference>
<dbReference type="SMR" id="C3LR15"/>
<dbReference type="KEGG" id="vcm:VCM66_2395"/>
<dbReference type="HOGENOM" id="CLU_007884_6_1_6"/>
<dbReference type="Proteomes" id="UP000001217">
    <property type="component" value="Chromosome I"/>
</dbReference>
<dbReference type="GO" id="GO:0005737">
    <property type="term" value="C:cytoplasm"/>
    <property type="evidence" value="ECO:0007669"/>
    <property type="project" value="UniProtKB-SubCell"/>
</dbReference>
<dbReference type="GO" id="GO:0005542">
    <property type="term" value="F:folic acid binding"/>
    <property type="evidence" value="ECO:0007669"/>
    <property type="project" value="UniProtKB-UniRule"/>
</dbReference>
<dbReference type="GO" id="GO:0016226">
    <property type="term" value="P:iron-sulfur cluster assembly"/>
    <property type="evidence" value="ECO:0007669"/>
    <property type="project" value="TreeGrafter"/>
</dbReference>
<dbReference type="GO" id="GO:0009451">
    <property type="term" value="P:RNA modification"/>
    <property type="evidence" value="ECO:0007669"/>
    <property type="project" value="InterPro"/>
</dbReference>
<dbReference type="GO" id="GO:0008033">
    <property type="term" value="P:tRNA processing"/>
    <property type="evidence" value="ECO:0007669"/>
    <property type="project" value="UniProtKB-UniRule"/>
</dbReference>
<dbReference type="FunFam" id="3.30.70.1400:FF:000002">
    <property type="entry name" value="tRNA-modifying protein YgfZ"/>
    <property type="match status" value="1"/>
</dbReference>
<dbReference type="Gene3D" id="2.40.30.160">
    <property type="match status" value="1"/>
</dbReference>
<dbReference type="Gene3D" id="3.30.70.1630">
    <property type="match status" value="1"/>
</dbReference>
<dbReference type="Gene3D" id="3.30.70.1400">
    <property type="entry name" value="Aminomethyltransferase beta-barrel domains"/>
    <property type="match status" value="1"/>
</dbReference>
<dbReference type="HAMAP" id="MF_01175">
    <property type="entry name" value="tRNA_modifying_YgfZ"/>
    <property type="match status" value="1"/>
</dbReference>
<dbReference type="InterPro" id="IPR029043">
    <property type="entry name" value="GcvT/YgfZ_C"/>
</dbReference>
<dbReference type="InterPro" id="IPR023758">
    <property type="entry name" value="tRNA-modifying_YgfZ"/>
</dbReference>
<dbReference type="InterPro" id="IPR045179">
    <property type="entry name" value="YgfZ/GcvT"/>
</dbReference>
<dbReference type="InterPro" id="IPR017703">
    <property type="entry name" value="YgfZ/GcvT_CS"/>
</dbReference>
<dbReference type="InterPro" id="IPR048451">
    <property type="entry name" value="YgfZ_barrel"/>
</dbReference>
<dbReference type="NCBIfam" id="NF007110">
    <property type="entry name" value="PRK09559.1"/>
    <property type="match status" value="1"/>
</dbReference>
<dbReference type="NCBIfam" id="TIGR03317">
    <property type="entry name" value="ygfZ_signature"/>
    <property type="match status" value="1"/>
</dbReference>
<dbReference type="PANTHER" id="PTHR22602">
    <property type="entry name" value="TRANSFERASE CAF17, MITOCHONDRIAL-RELATED"/>
    <property type="match status" value="1"/>
</dbReference>
<dbReference type="PANTHER" id="PTHR22602:SF0">
    <property type="entry name" value="TRANSFERASE CAF17, MITOCHONDRIAL-RELATED"/>
    <property type="match status" value="1"/>
</dbReference>
<dbReference type="Pfam" id="PF21130">
    <property type="entry name" value="YgfZ_barrel"/>
    <property type="match status" value="1"/>
</dbReference>
<dbReference type="SUPFAM" id="SSF101790">
    <property type="entry name" value="Aminomethyltransferase beta-barrel domain"/>
    <property type="match status" value="1"/>
</dbReference>
<dbReference type="SUPFAM" id="SSF103025">
    <property type="entry name" value="Folate-binding domain"/>
    <property type="match status" value="1"/>
</dbReference>
<gene>
    <name type="ordered locus">VCM66_2395</name>
</gene>
<organism>
    <name type="scientific">Vibrio cholerae serotype O1 (strain M66-2)</name>
    <dbReference type="NCBI Taxonomy" id="579112"/>
    <lineage>
        <taxon>Bacteria</taxon>
        <taxon>Pseudomonadati</taxon>
        <taxon>Pseudomonadota</taxon>
        <taxon>Gammaproteobacteria</taxon>
        <taxon>Vibrionales</taxon>
        <taxon>Vibrionaceae</taxon>
        <taxon>Vibrio</taxon>
    </lineage>
</organism>
<name>YGFZ_VIBCM</name>
<protein>
    <recommendedName>
        <fullName evidence="1">tRNA-modifying protein YgfZ</fullName>
    </recommendedName>
</protein>
<keyword id="KW-0963">Cytoplasm</keyword>
<keyword id="KW-0290">Folate-binding</keyword>
<keyword id="KW-0819">tRNA processing</keyword>
<sequence>MDWQNRFSVLNLSSHDPLPELMLTHLTGWGAITLVGADKKAYLQGQVTCNVVSLQEQQVTFGAHCDAKGKVWSVFRLFHHHDGYAMFQPQSAMEVELRELKKYAIFSKVTIAESSDIALGVMGSQADAWIDTVSETTGDVRRIAGGTAVRMSPQRWLLLVNAEQAEQYVNAWQGLHVEQSLWTRMDIEEAVPVVTQTAQNEHIPQALNVQAVDGISFTKGCYTGQETVARAKYRGINKRAMYIVKGNLSAPLSQDEPVVLERAVGENWRSAGALLTHYRFTDSIAIGLIVLPNDLEHDVKLRLAAQPDTRWHIQPLPYSLSDE</sequence>
<reference key="1">
    <citation type="journal article" date="2008" name="PLoS ONE">
        <title>A recalibrated molecular clock and independent origins for the cholera pandemic clones.</title>
        <authorList>
            <person name="Feng L."/>
            <person name="Reeves P.R."/>
            <person name="Lan R."/>
            <person name="Ren Y."/>
            <person name="Gao C."/>
            <person name="Zhou Z."/>
            <person name="Ren Y."/>
            <person name="Cheng J."/>
            <person name="Wang W."/>
            <person name="Wang J."/>
            <person name="Qian W."/>
            <person name="Li D."/>
            <person name="Wang L."/>
        </authorList>
    </citation>
    <scope>NUCLEOTIDE SEQUENCE [LARGE SCALE GENOMIC DNA]</scope>
    <source>
        <strain>M66-2</strain>
    </source>
</reference>
<feature type="chain" id="PRO_1000164413" description="tRNA-modifying protein YgfZ">
    <location>
        <begin position="1"/>
        <end position="323"/>
    </location>
</feature>
<feature type="binding site" evidence="1">
    <location>
        <position position="29"/>
    </location>
    <ligand>
        <name>folate</name>
        <dbReference type="ChEBI" id="CHEBI:62501"/>
    </ligand>
</feature>
<feature type="binding site" evidence="1">
    <location>
        <position position="182"/>
    </location>
    <ligand>
        <name>folate</name>
        <dbReference type="ChEBI" id="CHEBI:62501"/>
    </ligand>
</feature>
<evidence type="ECO:0000255" key="1">
    <source>
        <dbReference type="HAMAP-Rule" id="MF_01175"/>
    </source>
</evidence>
<proteinExistence type="inferred from homology"/>